<accession>A6U8K5</accession>
<sequence>MSEGVDLKELKRRMDGAISAFKHDIASLRTGRASANVLDPVTVEAYGSRMPLNQVANITVPEARMLSVSVWDKSMVGAVERAIRESNLGLNPIVDGQNLRIPLPELNEERRKSLVKVAHDYAEKSKVAVRHVRRDGMDDLKKAEKDGEIGQDESRAQSERVQKMTDDVISEIDRLLADKEKEIMQV</sequence>
<reference key="1">
    <citation type="submission" date="2007-06" db="EMBL/GenBank/DDBJ databases">
        <title>Complete sequence of Sinorhizobium medicae WSM419 chromosome.</title>
        <authorList>
            <consortium name="US DOE Joint Genome Institute"/>
            <person name="Copeland A."/>
            <person name="Lucas S."/>
            <person name="Lapidus A."/>
            <person name="Barry K."/>
            <person name="Glavina del Rio T."/>
            <person name="Dalin E."/>
            <person name="Tice H."/>
            <person name="Pitluck S."/>
            <person name="Chain P."/>
            <person name="Malfatti S."/>
            <person name="Shin M."/>
            <person name="Vergez L."/>
            <person name="Schmutz J."/>
            <person name="Larimer F."/>
            <person name="Land M."/>
            <person name="Hauser L."/>
            <person name="Kyrpides N."/>
            <person name="Mikhailova N."/>
            <person name="Reeve W.G."/>
            <person name="Richardson P."/>
        </authorList>
    </citation>
    <scope>NUCLEOTIDE SEQUENCE [LARGE SCALE GENOMIC DNA]</scope>
    <source>
        <strain>WSM419</strain>
    </source>
</reference>
<evidence type="ECO:0000255" key="1">
    <source>
        <dbReference type="HAMAP-Rule" id="MF_00040"/>
    </source>
</evidence>
<evidence type="ECO:0000256" key="2">
    <source>
        <dbReference type="SAM" id="MobiDB-lite"/>
    </source>
</evidence>
<keyword id="KW-0963">Cytoplasm</keyword>
<keyword id="KW-0648">Protein biosynthesis</keyword>
<protein>
    <recommendedName>
        <fullName evidence="1">Ribosome-recycling factor</fullName>
        <shortName evidence="1">RRF</shortName>
    </recommendedName>
    <alternativeName>
        <fullName evidence="1">Ribosome-releasing factor</fullName>
    </alternativeName>
</protein>
<proteinExistence type="inferred from homology"/>
<comment type="function">
    <text evidence="1">Responsible for the release of ribosomes from messenger RNA at the termination of protein biosynthesis. May increase the efficiency of translation by recycling ribosomes from one round of translation to another.</text>
</comment>
<comment type="subcellular location">
    <subcellularLocation>
        <location evidence="1">Cytoplasm</location>
    </subcellularLocation>
</comment>
<comment type="similarity">
    <text evidence="1">Belongs to the RRF family.</text>
</comment>
<dbReference type="EMBL" id="CP000738">
    <property type="protein sequence ID" value="ABR59985.1"/>
    <property type="molecule type" value="Genomic_DNA"/>
</dbReference>
<dbReference type="RefSeq" id="WP_011975304.1">
    <property type="nucleotide sequence ID" value="NC_009636.1"/>
</dbReference>
<dbReference type="RefSeq" id="YP_001326820.1">
    <property type="nucleotide sequence ID" value="NC_009636.1"/>
</dbReference>
<dbReference type="SMR" id="A6U8K5"/>
<dbReference type="STRING" id="366394.Smed_1134"/>
<dbReference type="GeneID" id="61612086"/>
<dbReference type="KEGG" id="smd:Smed_1134"/>
<dbReference type="PATRIC" id="fig|366394.8.peg.4259"/>
<dbReference type="eggNOG" id="COG0233">
    <property type="taxonomic scope" value="Bacteria"/>
</dbReference>
<dbReference type="HOGENOM" id="CLU_073981_2_0_5"/>
<dbReference type="OrthoDB" id="9804006at2"/>
<dbReference type="Proteomes" id="UP000001108">
    <property type="component" value="Chromosome"/>
</dbReference>
<dbReference type="GO" id="GO:0005829">
    <property type="term" value="C:cytosol"/>
    <property type="evidence" value="ECO:0007669"/>
    <property type="project" value="GOC"/>
</dbReference>
<dbReference type="GO" id="GO:0043023">
    <property type="term" value="F:ribosomal large subunit binding"/>
    <property type="evidence" value="ECO:0007669"/>
    <property type="project" value="TreeGrafter"/>
</dbReference>
<dbReference type="GO" id="GO:0002184">
    <property type="term" value="P:cytoplasmic translational termination"/>
    <property type="evidence" value="ECO:0007669"/>
    <property type="project" value="TreeGrafter"/>
</dbReference>
<dbReference type="CDD" id="cd00520">
    <property type="entry name" value="RRF"/>
    <property type="match status" value="1"/>
</dbReference>
<dbReference type="FunFam" id="1.10.132.20:FF:000001">
    <property type="entry name" value="Ribosome-recycling factor"/>
    <property type="match status" value="1"/>
</dbReference>
<dbReference type="FunFam" id="3.30.1360.40:FF:000001">
    <property type="entry name" value="Ribosome-recycling factor"/>
    <property type="match status" value="1"/>
</dbReference>
<dbReference type="Gene3D" id="3.30.1360.40">
    <property type="match status" value="1"/>
</dbReference>
<dbReference type="Gene3D" id="1.10.132.20">
    <property type="entry name" value="Ribosome-recycling factor"/>
    <property type="match status" value="1"/>
</dbReference>
<dbReference type="HAMAP" id="MF_00040">
    <property type="entry name" value="RRF"/>
    <property type="match status" value="1"/>
</dbReference>
<dbReference type="InterPro" id="IPR002661">
    <property type="entry name" value="Ribosome_recyc_fac"/>
</dbReference>
<dbReference type="InterPro" id="IPR023584">
    <property type="entry name" value="Ribosome_recyc_fac_dom"/>
</dbReference>
<dbReference type="InterPro" id="IPR036191">
    <property type="entry name" value="RRF_sf"/>
</dbReference>
<dbReference type="NCBIfam" id="TIGR00496">
    <property type="entry name" value="frr"/>
    <property type="match status" value="1"/>
</dbReference>
<dbReference type="PANTHER" id="PTHR20982:SF3">
    <property type="entry name" value="MITOCHONDRIAL RIBOSOME RECYCLING FACTOR PSEUDO 1"/>
    <property type="match status" value="1"/>
</dbReference>
<dbReference type="PANTHER" id="PTHR20982">
    <property type="entry name" value="RIBOSOME RECYCLING FACTOR"/>
    <property type="match status" value="1"/>
</dbReference>
<dbReference type="Pfam" id="PF01765">
    <property type="entry name" value="RRF"/>
    <property type="match status" value="1"/>
</dbReference>
<dbReference type="SUPFAM" id="SSF55194">
    <property type="entry name" value="Ribosome recycling factor, RRF"/>
    <property type="match status" value="1"/>
</dbReference>
<organism>
    <name type="scientific">Sinorhizobium medicae (strain WSM419)</name>
    <name type="common">Ensifer medicae</name>
    <dbReference type="NCBI Taxonomy" id="366394"/>
    <lineage>
        <taxon>Bacteria</taxon>
        <taxon>Pseudomonadati</taxon>
        <taxon>Pseudomonadota</taxon>
        <taxon>Alphaproteobacteria</taxon>
        <taxon>Hyphomicrobiales</taxon>
        <taxon>Rhizobiaceae</taxon>
        <taxon>Sinorhizobium/Ensifer group</taxon>
        <taxon>Sinorhizobium</taxon>
    </lineage>
</organism>
<name>RRF_SINMW</name>
<gene>
    <name evidence="1" type="primary">frr</name>
    <name type="ordered locus">Smed_1134</name>
</gene>
<feature type="chain" id="PRO_1000003271" description="Ribosome-recycling factor">
    <location>
        <begin position="1"/>
        <end position="186"/>
    </location>
</feature>
<feature type="region of interest" description="Disordered" evidence="2">
    <location>
        <begin position="135"/>
        <end position="164"/>
    </location>
</feature>